<name>TRPD_FLAJ1</name>
<reference key="1">
    <citation type="journal article" date="2009" name="Appl. Environ. Microbiol.">
        <title>Novel features of the polysaccharide-digesting gliding bacterium Flavobacterium johnsoniae as revealed by genome sequence analysis.</title>
        <authorList>
            <person name="McBride M.J."/>
            <person name="Xie G."/>
            <person name="Martens E.C."/>
            <person name="Lapidus A."/>
            <person name="Henrissat B."/>
            <person name="Rhodes R.G."/>
            <person name="Goltsman E."/>
            <person name="Wang W."/>
            <person name="Xu J."/>
            <person name="Hunnicutt D.W."/>
            <person name="Staroscik A.M."/>
            <person name="Hoover T.R."/>
            <person name="Cheng Y.Q."/>
            <person name="Stein J.L."/>
        </authorList>
    </citation>
    <scope>NUCLEOTIDE SEQUENCE [LARGE SCALE GENOMIC DNA]</scope>
    <source>
        <strain>ATCC 17061 / DSM 2064 / JCM 8514 / BCRC 14874 / CCUG 350202 / NBRC 14942 / NCIMB 11054 / UW101</strain>
    </source>
</reference>
<keyword id="KW-0028">Amino-acid biosynthesis</keyword>
<keyword id="KW-0057">Aromatic amino acid biosynthesis</keyword>
<keyword id="KW-0328">Glycosyltransferase</keyword>
<keyword id="KW-0460">Magnesium</keyword>
<keyword id="KW-0479">Metal-binding</keyword>
<keyword id="KW-0808">Transferase</keyword>
<keyword id="KW-0822">Tryptophan biosynthesis</keyword>
<gene>
    <name evidence="1" type="primary">trpD</name>
    <name type="ordered locus">Fjoh_4893</name>
</gene>
<dbReference type="EC" id="2.4.2.18" evidence="1"/>
<dbReference type="EMBL" id="CP000685">
    <property type="protein sequence ID" value="ABQ07892.1"/>
    <property type="molecule type" value="Genomic_DNA"/>
</dbReference>
<dbReference type="RefSeq" id="WP_012026858.1">
    <property type="nucleotide sequence ID" value="NC_009441.1"/>
</dbReference>
<dbReference type="SMR" id="A5FA70"/>
<dbReference type="STRING" id="376686.Fjoh_4893"/>
<dbReference type="KEGG" id="fjo:Fjoh_4893"/>
<dbReference type="eggNOG" id="COG0547">
    <property type="taxonomic scope" value="Bacteria"/>
</dbReference>
<dbReference type="HOGENOM" id="CLU_034315_3_1_10"/>
<dbReference type="OrthoDB" id="9806430at2"/>
<dbReference type="UniPathway" id="UPA00035">
    <property type="reaction ID" value="UER00041"/>
</dbReference>
<dbReference type="Proteomes" id="UP000006694">
    <property type="component" value="Chromosome"/>
</dbReference>
<dbReference type="GO" id="GO:0005829">
    <property type="term" value="C:cytosol"/>
    <property type="evidence" value="ECO:0007669"/>
    <property type="project" value="TreeGrafter"/>
</dbReference>
<dbReference type="GO" id="GO:0004048">
    <property type="term" value="F:anthranilate phosphoribosyltransferase activity"/>
    <property type="evidence" value="ECO:0007669"/>
    <property type="project" value="UniProtKB-UniRule"/>
</dbReference>
<dbReference type="GO" id="GO:0000287">
    <property type="term" value="F:magnesium ion binding"/>
    <property type="evidence" value="ECO:0007669"/>
    <property type="project" value="UniProtKB-UniRule"/>
</dbReference>
<dbReference type="GO" id="GO:0000162">
    <property type="term" value="P:L-tryptophan biosynthetic process"/>
    <property type="evidence" value="ECO:0007669"/>
    <property type="project" value="UniProtKB-UniRule"/>
</dbReference>
<dbReference type="Gene3D" id="3.40.1030.10">
    <property type="entry name" value="Nucleoside phosphorylase/phosphoribosyltransferase catalytic domain"/>
    <property type="match status" value="1"/>
</dbReference>
<dbReference type="Gene3D" id="1.20.970.10">
    <property type="entry name" value="Transferase, Pyrimidine Nucleoside Phosphorylase, Chain C"/>
    <property type="match status" value="1"/>
</dbReference>
<dbReference type="HAMAP" id="MF_00211">
    <property type="entry name" value="TrpD"/>
    <property type="match status" value="1"/>
</dbReference>
<dbReference type="InterPro" id="IPR005940">
    <property type="entry name" value="Anthranilate_Pribosyl_Tfrase"/>
</dbReference>
<dbReference type="InterPro" id="IPR000312">
    <property type="entry name" value="Glycosyl_Trfase_fam3"/>
</dbReference>
<dbReference type="InterPro" id="IPR017459">
    <property type="entry name" value="Glycosyl_Trfase_fam3_N_dom"/>
</dbReference>
<dbReference type="InterPro" id="IPR036320">
    <property type="entry name" value="Glycosyl_Trfase_fam3_N_dom_sf"/>
</dbReference>
<dbReference type="InterPro" id="IPR035902">
    <property type="entry name" value="Nuc_phospho_transferase"/>
</dbReference>
<dbReference type="NCBIfam" id="TIGR01245">
    <property type="entry name" value="trpD"/>
    <property type="match status" value="1"/>
</dbReference>
<dbReference type="PANTHER" id="PTHR43285">
    <property type="entry name" value="ANTHRANILATE PHOSPHORIBOSYLTRANSFERASE"/>
    <property type="match status" value="1"/>
</dbReference>
<dbReference type="PANTHER" id="PTHR43285:SF2">
    <property type="entry name" value="ANTHRANILATE PHOSPHORIBOSYLTRANSFERASE"/>
    <property type="match status" value="1"/>
</dbReference>
<dbReference type="Pfam" id="PF02885">
    <property type="entry name" value="Glycos_trans_3N"/>
    <property type="match status" value="1"/>
</dbReference>
<dbReference type="Pfam" id="PF00591">
    <property type="entry name" value="Glycos_transf_3"/>
    <property type="match status" value="1"/>
</dbReference>
<dbReference type="SUPFAM" id="SSF52418">
    <property type="entry name" value="Nucleoside phosphorylase/phosphoribosyltransferase catalytic domain"/>
    <property type="match status" value="1"/>
</dbReference>
<dbReference type="SUPFAM" id="SSF47648">
    <property type="entry name" value="Nucleoside phosphorylase/phosphoribosyltransferase N-terminal domain"/>
    <property type="match status" value="1"/>
</dbReference>
<protein>
    <recommendedName>
        <fullName evidence="1">Anthranilate phosphoribosyltransferase</fullName>
        <ecNumber evidence="1">2.4.2.18</ecNumber>
    </recommendedName>
</protein>
<proteinExistence type="inferred from homology"/>
<accession>A5FA70</accession>
<sequence>MKTILNKLINHEVLSKEEAKNVLINISSGQYNPSQISAFLTVFMMRSITIDELSGFREALLELCIRIDLSAYNTIDLCGTGGDGKDTFNISTLASFVAAGAGIKVAKHGNYGVSSISGSSNVMEKMGIKFSNDPSFLEKCIDQAGICVLHAPLFHPAMKNVGPIRKELAVKTFFNMLGPMVNPSFPQNQLVGVFNLELARMYAYLYQNTNVNFTILHSLDGYDEISLTGPTKIITSHMEGMIKPEDFGIRLLSQTEIEGGKTIEESAEIFTNIISGKGNEAQNNVVCANAAMAIATVTKCSPQEGFELAKESLFSGKGLKALQKLQELSL</sequence>
<comment type="function">
    <text evidence="1">Catalyzes the transfer of the phosphoribosyl group of 5-phosphorylribose-1-pyrophosphate (PRPP) to anthranilate to yield N-(5'-phosphoribosyl)-anthranilate (PRA).</text>
</comment>
<comment type="catalytic activity">
    <reaction evidence="1">
        <text>N-(5-phospho-beta-D-ribosyl)anthranilate + diphosphate = 5-phospho-alpha-D-ribose 1-diphosphate + anthranilate</text>
        <dbReference type="Rhea" id="RHEA:11768"/>
        <dbReference type="ChEBI" id="CHEBI:16567"/>
        <dbReference type="ChEBI" id="CHEBI:18277"/>
        <dbReference type="ChEBI" id="CHEBI:33019"/>
        <dbReference type="ChEBI" id="CHEBI:58017"/>
        <dbReference type="EC" id="2.4.2.18"/>
    </reaction>
</comment>
<comment type="cofactor">
    <cofactor evidence="1">
        <name>Mg(2+)</name>
        <dbReference type="ChEBI" id="CHEBI:18420"/>
    </cofactor>
    <text evidence="1">Binds 2 magnesium ions per monomer.</text>
</comment>
<comment type="pathway">
    <text evidence="1">Amino-acid biosynthesis; L-tryptophan biosynthesis; L-tryptophan from chorismate: step 2/5.</text>
</comment>
<comment type="subunit">
    <text evidence="1">Homodimer.</text>
</comment>
<comment type="similarity">
    <text evidence="1">Belongs to the anthranilate phosphoribosyltransferase family.</text>
</comment>
<organism>
    <name type="scientific">Flavobacterium johnsoniae (strain ATCC 17061 / DSM 2064 / JCM 8514 / BCRC 14874 / CCUG 350202 / NBRC 14942 / NCIMB 11054 / UW101)</name>
    <name type="common">Cytophaga johnsonae</name>
    <dbReference type="NCBI Taxonomy" id="376686"/>
    <lineage>
        <taxon>Bacteria</taxon>
        <taxon>Pseudomonadati</taxon>
        <taxon>Bacteroidota</taxon>
        <taxon>Flavobacteriia</taxon>
        <taxon>Flavobacteriales</taxon>
        <taxon>Flavobacteriaceae</taxon>
        <taxon>Flavobacterium</taxon>
    </lineage>
</organism>
<evidence type="ECO:0000255" key="1">
    <source>
        <dbReference type="HAMAP-Rule" id="MF_00211"/>
    </source>
</evidence>
<feature type="chain" id="PRO_1000099803" description="Anthranilate phosphoribosyltransferase">
    <location>
        <begin position="1"/>
        <end position="330"/>
    </location>
</feature>
<feature type="binding site" evidence="1">
    <location>
        <position position="79"/>
    </location>
    <ligand>
        <name>5-phospho-alpha-D-ribose 1-diphosphate</name>
        <dbReference type="ChEBI" id="CHEBI:58017"/>
    </ligand>
</feature>
<feature type="binding site" evidence="1">
    <location>
        <position position="79"/>
    </location>
    <ligand>
        <name>anthranilate</name>
        <dbReference type="ChEBI" id="CHEBI:16567"/>
        <label>1</label>
    </ligand>
</feature>
<feature type="binding site" evidence="1">
    <location>
        <begin position="82"/>
        <end position="83"/>
    </location>
    <ligand>
        <name>5-phospho-alpha-D-ribose 1-diphosphate</name>
        <dbReference type="ChEBI" id="CHEBI:58017"/>
    </ligand>
</feature>
<feature type="binding site" evidence="1">
    <location>
        <position position="87"/>
    </location>
    <ligand>
        <name>5-phospho-alpha-D-ribose 1-diphosphate</name>
        <dbReference type="ChEBI" id="CHEBI:58017"/>
    </ligand>
</feature>
<feature type="binding site" evidence="1">
    <location>
        <begin position="89"/>
        <end position="92"/>
    </location>
    <ligand>
        <name>5-phospho-alpha-D-ribose 1-diphosphate</name>
        <dbReference type="ChEBI" id="CHEBI:58017"/>
    </ligand>
</feature>
<feature type="binding site" evidence="1">
    <location>
        <position position="91"/>
    </location>
    <ligand>
        <name>Mg(2+)</name>
        <dbReference type="ChEBI" id="CHEBI:18420"/>
        <label>1</label>
    </ligand>
</feature>
<feature type="binding site" evidence="1">
    <location>
        <begin position="107"/>
        <end position="115"/>
    </location>
    <ligand>
        <name>5-phospho-alpha-D-ribose 1-diphosphate</name>
        <dbReference type="ChEBI" id="CHEBI:58017"/>
    </ligand>
</feature>
<feature type="binding site" evidence="1">
    <location>
        <position position="110"/>
    </location>
    <ligand>
        <name>anthranilate</name>
        <dbReference type="ChEBI" id="CHEBI:16567"/>
        <label>1</label>
    </ligand>
</feature>
<feature type="binding site" evidence="1">
    <location>
        <position position="119"/>
    </location>
    <ligand>
        <name>5-phospho-alpha-D-ribose 1-diphosphate</name>
        <dbReference type="ChEBI" id="CHEBI:58017"/>
    </ligand>
</feature>
<feature type="binding site" evidence="1">
    <location>
        <position position="165"/>
    </location>
    <ligand>
        <name>anthranilate</name>
        <dbReference type="ChEBI" id="CHEBI:16567"/>
        <label>2</label>
    </ligand>
</feature>
<feature type="binding site" evidence="1">
    <location>
        <position position="223"/>
    </location>
    <ligand>
        <name>Mg(2+)</name>
        <dbReference type="ChEBI" id="CHEBI:18420"/>
        <label>2</label>
    </ligand>
</feature>
<feature type="binding site" evidence="1">
    <location>
        <position position="224"/>
    </location>
    <ligand>
        <name>Mg(2+)</name>
        <dbReference type="ChEBI" id="CHEBI:18420"/>
        <label>1</label>
    </ligand>
</feature>
<feature type="binding site" evidence="1">
    <location>
        <position position="224"/>
    </location>
    <ligand>
        <name>Mg(2+)</name>
        <dbReference type="ChEBI" id="CHEBI:18420"/>
        <label>2</label>
    </ligand>
</feature>